<gene>
    <name evidence="1" type="primary">hisS</name>
    <name type="ordered locus">BURPS668_2189</name>
</gene>
<feature type="chain" id="PRO_1000016327" description="Histidine--tRNA ligase">
    <location>
        <begin position="1"/>
        <end position="446"/>
    </location>
</feature>
<reference key="1">
    <citation type="journal article" date="2010" name="Genome Biol. Evol.">
        <title>Continuing evolution of Burkholderia mallei through genome reduction and large-scale rearrangements.</title>
        <authorList>
            <person name="Losada L."/>
            <person name="Ronning C.M."/>
            <person name="DeShazer D."/>
            <person name="Woods D."/>
            <person name="Fedorova N."/>
            <person name="Kim H.S."/>
            <person name="Shabalina S.A."/>
            <person name="Pearson T.R."/>
            <person name="Brinkac L."/>
            <person name="Tan P."/>
            <person name="Nandi T."/>
            <person name="Crabtree J."/>
            <person name="Badger J."/>
            <person name="Beckstrom-Sternberg S."/>
            <person name="Saqib M."/>
            <person name="Schutzer S.E."/>
            <person name="Keim P."/>
            <person name="Nierman W.C."/>
        </authorList>
    </citation>
    <scope>NUCLEOTIDE SEQUENCE [LARGE SCALE GENOMIC DNA]</scope>
    <source>
        <strain>668</strain>
    </source>
</reference>
<comment type="catalytic activity">
    <reaction evidence="1">
        <text>tRNA(His) + L-histidine + ATP = L-histidyl-tRNA(His) + AMP + diphosphate + H(+)</text>
        <dbReference type="Rhea" id="RHEA:17313"/>
        <dbReference type="Rhea" id="RHEA-COMP:9665"/>
        <dbReference type="Rhea" id="RHEA-COMP:9689"/>
        <dbReference type="ChEBI" id="CHEBI:15378"/>
        <dbReference type="ChEBI" id="CHEBI:30616"/>
        <dbReference type="ChEBI" id="CHEBI:33019"/>
        <dbReference type="ChEBI" id="CHEBI:57595"/>
        <dbReference type="ChEBI" id="CHEBI:78442"/>
        <dbReference type="ChEBI" id="CHEBI:78527"/>
        <dbReference type="ChEBI" id="CHEBI:456215"/>
        <dbReference type="EC" id="6.1.1.21"/>
    </reaction>
</comment>
<comment type="subunit">
    <text evidence="1">Homodimer.</text>
</comment>
<comment type="subcellular location">
    <subcellularLocation>
        <location evidence="1">Cytoplasm</location>
    </subcellularLocation>
</comment>
<comment type="similarity">
    <text evidence="1">Belongs to the class-II aminoacyl-tRNA synthetase family.</text>
</comment>
<accession>A3NA53</accession>
<name>SYH_BURP6</name>
<sequence length="446" mass="49594">MTEQKRKLEKLTGVKGMNDILPQDAGLWEFFEATVKSLLRAYGYQNIRTPIVEHTQLFTRGIGEVTDIVEKEMYSFVDALNGENLTLRPENTAAVVRAAIEHNMLYDGPKRLWYLGPMFRHERPQRGRYRQFHQVGVEALGFAGPDADAEIIMMCQRLWDDLGLTGIKLEINSLGLAEERAAHRVELIKYLEQHVDKLDDDAQRRLYTNPLRVLDTKNPALQEIVRNAPQLIDFLGDVSRAHFDGLQRLLKANNLPFTINPRLVRGLDYYNLTVFEWVTDKLGAQGTVAAGGRYDPLIEQLGGKPTAACGWAMGVERILELLKEEHLVPEQEGVDVYVVHQGDAAREQAFIVAERLRDTGLDVILHCSADGAGASFKSQMKRADASGAAFAVILGEDEVANGTVSVKPLRGTGAEGEKNVQQSVPVESLTEFLINAMVATAEDGDD</sequence>
<evidence type="ECO:0000255" key="1">
    <source>
        <dbReference type="HAMAP-Rule" id="MF_00127"/>
    </source>
</evidence>
<protein>
    <recommendedName>
        <fullName evidence="1">Histidine--tRNA ligase</fullName>
        <ecNumber evidence="1">6.1.1.21</ecNumber>
    </recommendedName>
    <alternativeName>
        <fullName evidence="1">Histidyl-tRNA synthetase</fullName>
        <shortName evidence="1">HisRS</shortName>
    </alternativeName>
</protein>
<proteinExistence type="inferred from homology"/>
<organism>
    <name type="scientific">Burkholderia pseudomallei (strain 668)</name>
    <dbReference type="NCBI Taxonomy" id="320373"/>
    <lineage>
        <taxon>Bacteria</taxon>
        <taxon>Pseudomonadati</taxon>
        <taxon>Pseudomonadota</taxon>
        <taxon>Betaproteobacteria</taxon>
        <taxon>Burkholderiales</taxon>
        <taxon>Burkholderiaceae</taxon>
        <taxon>Burkholderia</taxon>
        <taxon>pseudomallei group</taxon>
    </lineage>
</organism>
<dbReference type="EC" id="6.1.1.21" evidence="1"/>
<dbReference type="EMBL" id="CP000570">
    <property type="protein sequence ID" value="ABN83199.1"/>
    <property type="molecule type" value="Genomic_DNA"/>
</dbReference>
<dbReference type="RefSeq" id="WP_011851730.1">
    <property type="nucleotide sequence ID" value="NC_009074.1"/>
</dbReference>
<dbReference type="SMR" id="A3NA53"/>
<dbReference type="KEGG" id="bpd:BURPS668_2189"/>
<dbReference type="HOGENOM" id="CLU_025113_1_1_4"/>
<dbReference type="GO" id="GO:0005737">
    <property type="term" value="C:cytoplasm"/>
    <property type="evidence" value="ECO:0007669"/>
    <property type="project" value="UniProtKB-SubCell"/>
</dbReference>
<dbReference type="GO" id="GO:0005524">
    <property type="term" value="F:ATP binding"/>
    <property type="evidence" value="ECO:0007669"/>
    <property type="project" value="UniProtKB-UniRule"/>
</dbReference>
<dbReference type="GO" id="GO:0004821">
    <property type="term" value="F:histidine-tRNA ligase activity"/>
    <property type="evidence" value="ECO:0007669"/>
    <property type="project" value="UniProtKB-UniRule"/>
</dbReference>
<dbReference type="GO" id="GO:0006427">
    <property type="term" value="P:histidyl-tRNA aminoacylation"/>
    <property type="evidence" value="ECO:0007669"/>
    <property type="project" value="UniProtKB-UniRule"/>
</dbReference>
<dbReference type="CDD" id="cd00773">
    <property type="entry name" value="HisRS-like_core"/>
    <property type="match status" value="1"/>
</dbReference>
<dbReference type="CDD" id="cd00859">
    <property type="entry name" value="HisRS_anticodon"/>
    <property type="match status" value="1"/>
</dbReference>
<dbReference type="FunFam" id="3.30.930.10:FF:000005">
    <property type="entry name" value="Histidine--tRNA ligase"/>
    <property type="match status" value="1"/>
</dbReference>
<dbReference type="Gene3D" id="3.40.50.800">
    <property type="entry name" value="Anticodon-binding domain"/>
    <property type="match status" value="1"/>
</dbReference>
<dbReference type="Gene3D" id="3.30.930.10">
    <property type="entry name" value="Bira Bifunctional Protein, Domain 2"/>
    <property type="match status" value="1"/>
</dbReference>
<dbReference type="HAMAP" id="MF_00127">
    <property type="entry name" value="His_tRNA_synth"/>
    <property type="match status" value="1"/>
</dbReference>
<dbReference type="InterPro" id="IPR006195">
    <property type="entry name" value="aa-tRNA-synth_II"/>
</dbReference>
<dbReference type="InterPro" id="IPR045864">
    <property type="entry name" value="aa-tRNA-synth_II/BPL/LPL"/>
</dbReference>
<dbReference type="InterPro" id="IPR004154">
    <property type="entry name" value="Anticodon-bd"/>
</dbReference>
<dbReference type="InterPro" id="IPR036621">
    <property type="entry name" value="Anticodon-bd_dom_sf"/>
</dbReference>
<dbReference type="InterPro" id="IPR015807">
    <property type="entry name" value="His-tRNA-ligase"/>
</dbReference>
<dbReference type="InterPro" id="IPR041715">
    <property type="entry name" value="HisRS-like_core"/>
</dbReference>
<dbReference type="InterPro" id="IPR004516">
    <property type="entry name" value="HisRS/HisZ"/>
</dbReference>
<dbReference type="InterPro" id="IPR033656">
    <property type="entry name" value="HisRS_anticodon"/>
</dbReference>
<dbReference type="NCBIfam" id="TIGR00442">
    <property type="entry name" value="hisS"/>
    <property type="match status" value="1"/>
</dbReference>
<dbReference type="PANTHER" id="PTHR43707:SF1">
    <property type="entry name" value="HISTIDINE--TRNA LIGASE, MITOCHONDRIAL-RELATED"/>
    <property type="match status" value="1"/>
</dbReference>
<dbReference type="PANTHER" id="PTHR43707">
    <property type="entry name" value="HISTIDYL-TRNA SYNTHETASE"/>
    <property type="match status" value="1"/>
</dbReference>
<dbReference type="Pfam" id="PF03129">
    <property type="entry name" value="HGTP_anticodon"/>
    <property type="match status" value="1"/>
</dbReference>
<dbReference type="Pfam" id="PF13393">
    <property type="entry name" value="tRNA-synt_His"/>
    <property type="match status" value="1"/>
</dbReference>
<dbReference type="PIRSF" id="PIRSF001549">
    <property type="entry name" value="His-tRNA_synth"/>
    <property type="match status" value="1"/>
</dbReference>
<dbReference type="SUPFAM" id="SSF52954">
    <property type="entry name" value="Class II aaRS ABD-related"/>
    <property type="match status" value="1"/>
</dbReference>
<dbReference type="SUPFAM" id="SSF55681">
    <property type="entry name" value="Class II aaRS and biotin synthetases"/>
    <property type="match status" value="1"/>
</dbReference>
<dbReference type="PROSITE" id="PS50862">
    <property type="entry name" value="AA_TRNA_LIGASE_II"/>
    <property type="match status" value="1"/>
</dbReference>
<keyword id="KW-0030">Aminoacyl-tRNA synthetase</keyword>
<keyword id="KW-0067">ATP-binding</keyword>
<keyword id="KW-0963">Cytoplasm</keyword>
<keyword id="KW-0436">Ligase</keyword>
<keyword id="KW-0547">Nucleotide-binding</keyword>
<keyword id="KW-0648">Protein biosynthesis</keyword>